<organism>
    <name type="scientific">Chaetomium globosum (strain ATCC 6205 / CBS 148.51 / DSM 1962 / NBRC 6347 / NRRL 1970)</name>
    <name type="common">Soil fungus</name>
    <dbReference type="NCBI Taxonomy" id="306901"/>
    <lineage>
        <taxon>Eukaryota</taxon>
        <taxon>Fungi</taxon>
        <taxon>Dikarya</taxon>
        <taxon>Ascomycota</taxon>
        <taxon>Pezizomycotina</taxon>
        <taxon>Sordariomycetes</taxon>
        <taxon>Sordariomycetidae</taxon>
        <taxon>Sordariales</taxon>
        <taxon>Chaetomiaceae</taxon>
        <taxon>Chaetomium</taxon>
    </lineage>
</organism>
<reference key="1">
    <citation type="journal article" date="2015" name="Genome Announc.">
        <title>Draft genome sequence of the cellulolytic fungus Chaetomium globosum.</title>
        <authorList>
            <person name="Cuomo C.A."/>
            <person name="Untereiner W.A."/>
            <person name="Ma L.-J."/>
            <person name="Grabherr M."/>
            <person name="Birren B.W."/>
        </authorList>
    </citation>
    <scope>NUCLEOTIDE SEQUENCE [LARGE SCALE GENOMIC DNA]</scope>
    <source>
        <strain>ATCC 6205 / CBS 148.51 / DSM 1962 / NBRC 6347 / NRRL 1970</strain>
    </source>
</reference>
<feature type="chain" id="PRO_0000281689" description="ATP-dependent RNA helicase DED1">
    <location>
        <begin position="1"/>
        <end position="688"/>
    </location>
</feature>
<feature type="domain" description="Helicase ATP-binding" evidence="2">
    <location>
        <begin position="229"/>
        <end position="419"/>
    </location>
</feature>
<feature type="domain" description="Helicase C-terminal" evidence="3">
    <location>
        <begin position="430"/>
        <end position="590"/>
    </location>
</feature>
<feature type="region of interest" description="Disordered" evidence="4">
    <location>
        <begin position="1"/>
        <end position="141"/>
    </location>
</feature>
<feature type="region of interest" description="Disordered" evidence="4">
    <location>
        <begin position="593"/>
        <end position="623"/>
    </location>
</feature>
<feature type="short sequence motif" description="Q motif">
    <location>
        <begin position="198"/>
        <end position="226"/>
    </location>
</feature>
<feature type="short sequence motif" description="DEAD box">
    <location>
        <begin position="363"/>
        <end position="366"/>
    </location>
</feature>
<feature type="compositionally biased region" description="Low complexity" evidence="4">
    <location>
        <begin position="17"/>
        <end position="27"/>
    </location>
</feature>
<feature type="compositionally biased region" description="Low complexity" evidence="4">
    <location>
        <begin position="42"/>
        <end position="51"/>
    </location>
</feature>
<feature type="compositionally biased region" description="Pro residues" evidence="4">
    <location>
        <begin position="52"/>
        <end position="65"/>
    </location>
</feature>
<feature type="compositionally biased region" description="Low complexity" evidence="4">
    <location>
        <begin position="66"/>
        <end position="75"/>
    </location>
</feature>
<feature type="compositionally biased region" description="Gly residues" evidence="4">
    <location>
        <begin position="87"/>
        <end position="99"/>
    </location>
</feature>
<feature type="compositionally biased region" description="Gly residues" evidence="4">
    <location>
        <begin position="124"/>
        <end position="139"/>
    </location>
</feature>
<feature type="compositionally biased region" description="Gly residues" evidence="4">
    <location>
        <begin position="595"/>
        <end position="615"/>
    </location>
</feature>
<feature type="binding site" evidence="2">
    <location>
        <begin position="242"/>
        <end position="249"/>
    </location>
    <ligand>
        <name>ATP</name>
        <dbReference type="ChEBI" id="CHEBI:30616"/>
    </ligand>
</feature>
<accession>Q2HBE7</accession>
<dbReference type="EC" id="3.6.4.13"/>
<dbReference type="EMBL" id="CH408030">
    <property type="protein sequence ID" value="EAQ90522.1"/>
    <property type="molecule type" value="Genomic_DNA"/>
</dbReference>
<dbReference type="RefSeq" id="XP_001228973.1">
    <property type="nucleotide sequence ID" value="XM_001228972.1"/>
</dbReference>
<dbReference type="SMR" id="Q2HBE7"/>
<dbReference type="FunCoup" id="Q2HBE7">
    <property type="interactions" value="1121"/>
</dbReference>
<dbReference type="STRING" id="306901.Q2HBE7"/>
<dbReference type="GeneID" id="4388758"/>
<dbReference type="VEuPathDB" id="FungiDB:CHGG_02457"/>
<dbReference type="eggNOG" id="KOG0335">
    <property type="taxonomic scope" value="Eukaryota"/>
</dbReference>
<dbReference type="HOGENOM" id="CLU_003041_16_3_1"/>
<dbReference type="InParanoid" id="Q2HBE7"/>
<dbReference type="OMA" id="CYRSWVR"/>
<dbReference type="OrthoDB" id="196131at2759"/>
<dbReference type="Proteomes" id="UP000001056">
    <property type="component" value="Unassembled WGS sequence"/>
</dbReference>
<dbReference type="GO" id="GO:0010494">
    <property type="term" value="C:cytoplasmic stress granule"/>
    <property type="evidence" value="ECO:0007669"/>
    <property type="project" value="EnsemblFungi"/>
</dbReference>
<dbReference type="GO" id="GO:0005681">
    <property type="term" value="C:spliceosomal complex"/>
    <property type="evidence" value="ECO:0007669"/>
    <property type="project" value="EnsemblFungi"/>
</dbReference>
<dbReference type="GO" id="GO:0005524">
    <property type="term" value="F:ATP binding"/>
    <property type="evidence" value="ECO:0007669"/>
    <property type="project" value="UniProtKB-KW"/>
</dbReference>
<dbReference type="GO" id="GO:0016887">
    <property type="term" value="F:ATP hydrolysis activity"/>
    <property type="evidence" value="ECO:0007669"/>
    <property type="project" value="RHEA"/>
</dbReference>
<dbReference type="GO" id="GO:0031370">
    <property type="term" value="F:eukaryotic initiation factor 4G binding"/>
    <property type="evidence" value="ECO:0007669"/>
    <property type="project" value="EnsemblFungi"/>
</dbReference>
<dbReference type="GO" id="GO:0051880">
    <property type="term" value="F:G-quadruplex DNA binding"/>
    <property type="evidence" value="ECO:0007669"/>
    <property type="project" value="EnsemblFungi"/>
</dbReference>
<dbReference type="GO" id="GO:0002151">
    <property type="term" value="F:G-quadruplex RNA binding"/>
    <property type="evidence" value="ECO:0007669"/>
    <property type="project" value="EnsemblFungi"/>
</dbReference>
<dbReference type="GO" id="GO:0003729">
    <property type="term" value="F:mRNA binding"/>
    <property type="evidence" value="ECO:0007669"/>
    <property type="project" value="EnsemblFungi"/>
</dbReference>
<dbReference type="GO" id="GO:0003724">
    <property type="term" value="F:RNA helicase activity"/>
    <property type="evidence" value="ECO:0007669"/>
    <property type="project" value="UniProtKB-EC"/>
</dbReference>
<dbReference type="GO" id="GO:0033592">
    <property type="term" value="F:RNA strand annealing activity"/>
    <property type="evidence" value="ECO:0007669"/>
    <property type="project" value="EnsemblFungi"/>
</dbReference>
<dbReference type="GO" id="GO:0003743">
    <property type="term" value="F:translation initiation factor activity"/>
    <property type="evidence" value="ECO:0007669"/>
    <property type="project" value="UniProtKB-KW"/>
</dbReference>
<dbReference type="GO" id="GO:0002183">
    <property type="term" value="P:cytoplasmic translational initiation"/>
    <property type="evidence" value="ECO:0007669"/>
    <property type="project" value="EnsemblFungi"/>
</dbReference>
<dbReference type="GO" id="GO:1990625">
    <property type="term" value="P:negative regulation of cytoplasmic translational initiation in response to stress"/>
    <property type="evidence" value="ECO:0007669"/>
    <property type="project" value="EnsemblFungi"/>
</dbReference>
<dbReference type="GO" id="GO:1901195">
    <property type="term" value="P:positive regulation of formation of translation preinitiation complex"/>
    <property type="evidence" value="ECO:0007669"/>
    <property type="project" value="EnsemblFungi"/>
</dbReference>
<dbReference type="GO" id="GO:0031047">
    <property type="term" value="P:regulatory ncRNA-mediated gene silencing"/>
    <property type="evidence" value="ECO:0007669"/>
    <property type="project" value="EnsemblFungi"/>
</dbReference>
<dbReference type="GO" id="GO:0000390">
    <property type="term" value="P:spliceosomal complex disassembly"/>
    <property type="evidence" value="ECO:0007669"/>
    <property type="project" value="EnsemblFungi"/>
</dbReference>
<dbReference type="CDD" id="cd17967">
    <property type="entry name" value="DEADc_DDX3_DDX4"/>
    <property type="match status" value="1"/>
</dbReference>
<dbReference type="CDD" id="cd18787">
    <property type="entry name" value="SF2_C_DEAD"/>
    <property type="match status" value="1"/>
</dbReference>
<dbReference type="FunFam" id="3.40.50.300:FF:000160">
    <property type="entry name" value="ATP-dependent RNA helicase DDX3X"/>
    <property type="match status" value="1"/>
</dbReference>
<dbReference type="FunFam" id="3.40.50.300:FF:000008">
    <property type="entry name" value="ATP-dependent RNA helicase RhlB"/>
    <property type="match status" value="1"/>
</dbReference>
<dbReference type="Gene3D" id="3.40.50.300">
    <property type="entry name" value="P-loop containing nucleotide triphosphate hydrolases"/>
    <property type="match status" value="2"/>
</dbReference>
<dbReference type="InterPro" id="IPR011545">
    <property type="entry name" value="DEAD/DEAH_box_helicase_dom"/>
</dbReference>
<dbReference type="InterPro" id="IPR044763">
    <property type="entry name" value="Ded1/Dbp1_DEADc"/>
</dbReference>
<dbReference type="InterPro" id="IPR014001">
    <property type="entry name" value="Helicase_ATP-bd"/>
</dbReference>
<dbReference type="InterPro" id="IPR001650">
    <property type="entry name" value="Helicase_C-like"/>
</dbReference>
<dbReference type="InterPro" id="IPR027417">
    <property type="entry name" value="P-loop_NTPase"/>
</dbReference>
<dbReference type="InterPro" id="IPR000629">
    <property type="entry name" value="RNA-helicase_DEAD-box_CS"/>
</dbReference>
<dbReference type="InterPro" id="IPR014014">
    <property type="entry name" value="RNA_helicase_DEAD_Q_motif"/>
</dbReference>
<dbReference type="PANTHER" id="PTHR47958">
    <property type="entry name" value="ATP-DEPENDENT RNA HELICASE DBP3"/>
    <property type="match status" value="1"/>
</dbReference>
<dbReference type="Pfam" id="PF00270">
    <property type="entry name" value="DEAD"/>
    <property type="match status" value="1"/>
</dbReference>
<dbReference type="Pfam" id="PF00271">
    <property type="entry name" value="Helicase_C"/>
    <property type="match status" value="1"/>
</dbReference>
<dbReference type="SMART" id="SM00487">
    <property type="entry name" value="DEXDc"/>
    <property type="match status" value="1"/>
</dbReference>
<dbReference type="SMART" id="SM00490">
    <property type="entry name" value="HELICc"/>
    <property type="match status" value="1"/>
</dbReference>
<dbReference type="SUPFAM" id="SSF52540">
    <property type="entry name" value="P-loop containing nucleoside triphosphate hydrolases"/>
    <property type="match status" value="1"/>
</dbReference>
<dbReference type="PROSITE" id="PS00039">
    <property type="entry name" value="DEAD_ATP_HELICASE"/>
    <property type="match status" value="1"/>
</dbReference>
<dbReference type="PROSITE" id="PS51192">
    <property type="entry name" value="HELICASE_ATP_BIND_1"/>
    <property type="match status" value="1"/>
</dbReference>
<dbReference type="PROSITE" id="PS51194">
    <property type="entry name" value="HELICASE_CTER"/>
    <property type="match status" value="1"/>
</dbReference>
<dbReference type="PROSITE" id="PS51195">
    <property type="entry name" value="Q_MOTIF"/>
    <property type="match status" value="1"/>
</dbReference>
<comment type="function">
    <text evidence="1">ATP-binding RNA helicase involved in translation initiation. Remodels RNA in response to ADP and ATP concentrations by facilitating disruption, but also formation of RNA duplexes (By similarity).</text>
</comment>
<comment type="catalytic activity">
    <reaction>
        <text>ATP + H2O = ADP + phosphate + H(+)</text>
        <dbReference type="Rhea" id="RHEA:13065"/>
        <dbReference type="ChEBI" id="CHEBI:15377"/>
        <dbReference type="ChEBI" id="CHEBI:15378"/>
        <dbReference type="ChEBI" id="CHEBI:30616"/>
        <dbReference type="ChEBI" id="CHEBI:43474"/>
        <dbReference type="ChEBI" id="CHEBI:456216"/>
        <dbReference type="EC" id="3.6.4.13"/>
    </reaction>
</comment>
<comment type="subcellular location">
    <subcellularLocation>
        <location evidence="1">Cytoplasm</location>
    </subcellularLocation>
</comment>
<comment type="domain">
    <text>The Q motif is unique to and characteristic of the DEAD box family of RNA helicases and controls ATP binding and hydrolysis.</text>
</comment>
<comment type="similarity">
    <text evidence="5">Belongs to the DEAD box helicase family. DDX3/DED1 subfamily.</text>
</comment>
<sequence>MADQLNGDMGNLSLGSPQPGQHPGQQPTARSYIPPHMRGKMSAPGSPGSPIASPPMNSPPQPGPGSSPMGGLNNSAWAGNNNFDARAGGGGNWSGGYENGPGPQPWGGPRGGGGFNRNAYRGPNAGGGGGGNMGGGVGRGEGRWIEGKHVIGNSDPRLERDLFGTADDPSKQHTGINFEKYDDIPVNPSGRDVPEPVLTFSNPPLDAHLLSNIELARYQIPTPVQKYSIPIVINGRDLMACAQTGSGKTGGFLFPIMHQSFTQGPSPIPAQSGGGYRQRKAYPTALILAPTRELVSQIYEEARKFAYRSWVRPCVVYGGADIGSQLRQMERGCDLLVATPGRLVDLIERGRISLCNIKYLVLDEADRMLDMGFEPQIRRIVQGEDMPTTGQRQTLMFSATFPRDIQMLAQDFLNDYVFLSVGRVGSTSENITQKVEYVEDVDKRSVLLDILHTHAGGLTLIFVETKRMADSLSDFLINQNFPATSIHGDRTQRERERALELFRNGKCPILVATAVAARGLDIPNVTHVINYDLPTDVDDYVHRIGRTGRAGNTGIATAFFNRGNRGIVRELLDLLKEANQEVPAFLETIARESSFGGGGGRGRGGGGRGRGGRGGNTDFRKYGGGGGGFGGGGGGFGGGQHGSGGGGGFGGGGGYGGAPQSGGYGGGYSGGYGGGYGNPGGAGGQSWW</sequence>
<proteinExistence type="inferred from homology"/>
<name>DED1_CHAGB</name>
<gene>
    <name type="primary">DED1</name>
    <name type="ORF">CHGG_02457</name>
</gene>
<keyword id="KW-0067">ATP-binding</keyword>
<keyword id="KW-0963">Cytoplasm</keyword>
<keyword id="KW-0347">Helicase</keyword>
<keyword id="KW-0378">Hydrolase</keyword>
<keyword id="KW-0396">Initiation factor</keyword>
<keyword id="KW-0547">Nucleotide-binding</keyword>
<keyword id="KW-0648">Protein biosynthesis</keyword>
<keyword id="KW-1185">Reference proteome</keyword>
<keyword id="KW-0694">RNA-binding</keyword>
<evidence type="ECO:0000250" key="1"/>
<evidence type="ECO:0000255" key="2">
    <source>
        <dbReference type="PROSITE-ProRule" id="PRU00541"/>
    </source>
</evidence>
<evidence type="ECO:0000255" key="3">
    <source>
        <dbReference type="PROSITE-ProRule" id="PRU00542"/>
    </source>
</evidence>
<evidence type="ECO:0000256" key="4">
    <source>
        <dbReference type="SAM" id="MobiDB-lite"/>
    </source>
</evidence>
<evidence type="ECO:0000305" key="5"/>
<protein>
    <recommendedName>
        <fullName>ATP-dependent RNA helicase DED1</fullName>
        <ecNumber>3.6.4.13</ecNumber>
    </recommendedName>
</protein>